<feature type="chain" id="PRO_0000384252" description="Maintenance of mitochondrial morphology protein 1">
    <location>
        <begin position="1"/>
        <end position="426"/>
    </location>
</feature>
<feature type="topological domain" description="Lumenal" evidence="1">
    <location>
        <begin position="1"/>
        <end position="100"/>
    </location>
</feature>
<feature type="transmembrane region" description="Helical" evidence="1">
    <location>
        <begin position="101"/>
        <end position="121"/>
    </location>
</feature>
<feature type="topological domain" description="Cytoplasmic" evidence="1">
    <location>
        <begin position="122"/>
        <end position="426"/>
    </location>
</feature>
<feature type="domain" description="SMP-LTD" evidence="1">
    <location>
        <begin position="194"/>
        <end position="409"/>
    </location>
</feature>
<dbReference type="EMBL" id="ABSV01001556">
    <property type="protein sequence ID" value="EDZ70756.1"/>
    <property type="molecule type" value="Genomic_DNA"/>
</dbReference>
<dbReference type="SMR" id="B5VMT6"/>
<dbReference type="Proteomes" id="UP000008988">
    <property type="component" value="Unassembled WGS sequence"/>
</dbReference>
<dbReference type="GO" id="GO:0005789">
    <property type="term" value="C:endoplasmic reticulum membrane"/>
    <property type="evidence" value="ECO:0007669"/>
    <property type="project" value="UniProtKB-SubCell"/>
</dbReference>
<dbReference type="GO" id="GO:0032865">
    <property type="term" value="C:ERMES complex"/>
    <property type="evidence" value="ECO:0007669"/>
    <property type="project" value="UniProtKB-UniRule"/>
</dbReference>
<dbReference type="GO" id="GO:0008289">
    <property type="term" value="F:lipid binding"/>
    <property type="evidence" value="ECO:0007669"/>
    <property type="project" value="UniProtKB-KW"/>
</dbReference>
<dbReference type="GO" id="GO:0006869">
    <property type="term" value="P:lipid transport"/>
    <property type="evidence" value="ECO:0007669"/>
    <property type="project" value="UniProtKB-KW"/>
</dbReference>
<dbReference type="GO" id="GO:0000002">
    <property type="term" value="P:mitochondrial genome maintenance"/>
    <property type="evidence" value="ECO:0007669"/>
    <property type="project" value="UniProtKB-UniRule"/>
</dbReference>
<dbReference type="GO" id="GO:0045040">
    <property type="term" value="P:protein insertion into mitochondrial outer membrane"/>
    <property type="evidence" value="ECO:0007669"/>
    <property type="project" value="UniProtKB-UniRule"/>
</dbReference>
<dbReference type="CDD" id="cd21671">
    <property type="entry name" value="SMP_Mmm1"/>
    <property type="match status" value="1"/>
</dbReference>
<dbReference type="HAMAP" id="MF_03103">
    <property type="entry name" value="Mmm1"/>
    <property type="match status" value="1"/>
</dbReference>
<dbReference type="InterPro" id="IPR027537">
    <property type="entry name" value="Mmm1"/>
</dbReference>
<dbReference type="InterPro" id="IPR019411">
    <property type="entry name" value="MMM1_dom"/>
</dbReference>
<dbReference type="InterPro" id="IPR031468">
    <property type="entry name" value="SMP_LBD"/>
</dbReference>
<dbReference type="PANTHER" id="PTHR13466">
    <property type="entry name" value="TEX2 PROTEIN-RELATED"/>
    <property type="match status" value="1"/>
</dbReference>
<dbReference type="Pfam" id="PF10296">
    <property type="entry name" value="MMM1"/>
    <property type="match status" value="1"/>
</dbReference>
<dbReference type="PROSITE" id="PS51847">
    <property type="entry name" value="SMP"/>
    <property type="match status" value="1"/>
</dbReference>
<keyword id="KW-0256">Endoplasmic reticulum</keyword>
<keyword id="KW-0445">Lipid transport</keyword>
<keyword id="KW-0446">Lipid-binding</keyword>
<keyword id="KW-0472">Membrane</keyword>
<keyword id="KW-0812">Transmembrane</keyword>
<keyword id="KW-1133">Transmembrane helix</keyword>
<keyword id="KW-0813">Transport</keyword>
<sequence>MTDSENESTETDSLMTFDDYISKELPEHLQRLIMENLKGSTTNDLKQTSNNSEFNVSKNGSFKGLDDAIQALQMQSVLHPSSLGSLATSSKFSGWSFAQGFFVGQLSIVLLFIFFLKFFIFSDEPSKSKNPKPAASRHRSKFKEYPFISREFLTSLVRKGAKQHYELNEEAENEHLQELALILEKTYYNVDVHPAESLDWFNVLVAQIIQQFRSEAWHRDNILHSLNDFIGRKSPDLPEYLDTIKITELDTGDDFPIFSNCRIQYSPNSGNKKLEAKIDIDLNDHLTLGVETKLLLNYPKPGIAALPINLVVSIVRFQACLTVSLTNAEEFASTSNGSSSENGMEGNSGYFLMFSFSPEYRMEFEIKSLIGSRSKLENIPKIGSVIEYQIKKWFVERCVEPRFQFVRLPSMWPRSKNTREEKPTEL</sequence>
<comment type="function">
    <text evidence="1">Component of the ERMES/MDM complex, which serves as a molecular tether to connect the endoplasmic reticulum (ER) and mitochondria. Components of this complex are involved in the control of mitochondrial shape and protein biogenesis, and function in nonvesicular lipid trafficking between the ER and mitochondria. The MDM12-MMM1 subcomplex functions in the major beta-barrel assembly pathway that is responsible for biogenesis of all outer membrane beta-barrel proteins, and acts in a late step after the SAM complex. The MDM10-MDM12-MMM1 subcomplex further acts in the TOM40-specific pathway after the action of the MDM12-MMM1 complex. Essential for establishing and maintaining the structure of mitochondria and maintenance of mtDNA nucleoids.</text>
</comment>
<comment type="subunit">
    <text evidence="1">Homodimer. Component of the ER-mitochondria encounter structure (ERMES) or MDM complex, composed of MMM1, MDM10, MDM12 and MDM34. A MMM1 homodimer associates with one molecule of MDM12 on each side in a pairwise head-to-tail manner, and the SMP-LTD domains of MMM1 and MDM12 generate a continuous hydrophobic tunnel for phospholipid trafficking.</text>
</comment>
<comment type="subcellular location">
    <subcellularLocation>
        <location evidence="1">Endoplasmic reticulum membrane</location>
        <topology evidence="1">Single-pass type I membrane protein</topology>
    </subcellularLocation>
    <text evidence="1">The ERMES/MDM complex localizes to a few discrete foci (around 10 per single cell), that represent mitochondria-endoplasmic reticulum junctions. These foci are often found next to mtDNA nucleoids.</text>
</comment>
<comment type="domain">
    <text evidence="1">The SMP-LTD domain is a barrel-like domain that can bind various types of glycerophospholipids in its interior and mediate their transfer between two adjacent bilayers.</text>
</comment>
<comment type="similarity">
    <text evidence="1">Belongs to the MMM1 family.</text>
</comment>
<organism>
    <name type="scientific">Saccharomyces cerevisiae (strain AWRI1631)</name>
    <name type="common">Baker's yeast</name>
    <dbReference type="NCBI Taxonomy" id="545124"/>
    <lineage>
        <taxon>Eukaryota</taxon>
        <taxon>Fungi</taxon>
        <taxon>Dikarya</taxon>
        <taxon>Ascomycota</taxon>
        <taxon>Saccharomycotina</taxon>
        <taxon>Saccharomycetes</taxon>
        <taxon>Saccharomycetales</taxon>
        <taxon>Saccharomycetaceae</taxon>
        <taxon>Saccharomyces</taxon>
    </lineage>
</organism>
<gene>
    <name evidence="1" type="primary">MMM1</name>
    <name type="ORF">AWRI1631_120460</name>
</gene>
<proteinExistence type="inferred from homology"/>
<name>MMM1_YEAS6</name>
<reference key="1">
    <citation type="journal article" date="2008" name="FEMS Yeast Res.">
        <title>Comparative genome analysis of a Saccharomyces cerevisiae wine strain.</title>
        <authorList>
            <person name="Borneman A.R."/>
            <person name="Forgan A.H."/>
            <person name="Pretorius I.S."/>
            <person name="Chambers P.J."/>
        </authorList>
    </citation>
    <scope>NUCLEOTIDE SEQUENCE [LARGE SCALE GENOMIC DNA]</scope>
    <source>
        <strain>AWRI1631</strain>
    </source>
</reference>
<evidence type="ECO:0000255" key="1">
    <source>
        <dbReference type="HAMAP-Rule" id="MF_03103"/>
    </source>
</evidence>
<accession>B5VMT6</accession>
<protein>
    <recommendedName>
        <fullName evidence="1">Maintenance of mitochondrial morphology protein 1</fullName>
    </recommendedName>
    <alternativeName>
        <fullName evidence="1">Mitochondrial outer membrane protein MMM1</fullName>
    </alternativeName>
    <alternativeName>
        <fullName evidence="1">Yeast mitochondrial escape protein 6</fullName>
    </alternativeName>
</protein>